<comment type="function">
    <text>Important for the export of protein containing nuclear export signal (NES) out of the nucleus. Stimulates the GTPase activity of GSP1 and GSP2.</text>
</comment>
<comment type="subunit">
    <text>Interacts with GSP1 and PRP20.</text>
</comment>
<comment type="subcellular location">
    <subcellularLocation>
        <location>Cytoplasm</location>
    </subcellularLocation>
    <subcellularLocation>
        <location>Nucleus</location>
    </subcellularLocation>
    <text>Shuttles between the nucleus and cytoplasm.</text>
</comment>
<comment type="similarity">
    <text evidence="3">Belongs to the RANBP1 family.</text>
</comment>
<sequence length="201" mass="22953">MSSEDKKPVVDKKEEAAPKPPSSAVFSMFGGKKAEKPETKKDEEDTKEETKKEGDDAPESPDIHFEPVVHLEKVDVKTMEEDEEVLYKVRAKLFRFDADAKEWKERGTGDCKFLKNKKTNKVRILMRRDKTLKICANHIIAPEYTLKPNVGSDRSWVYACTADIAEGEAEAFTFAIRFGSKENADKFKEEFEKAQEINKKA</sequence>
<keyword id="KW-0002">3D-structure</keyword>
<keyword id="KW-0963">Cytoplasm</keyword>
<keyword id="KW-0343">GTPase activation</keyword>
<keyword id="KW-0539">Nucleus</keyword>
<keyword id="KW-0597">Phosphoprotein</keyword>
<keyword id="KW-0653">Protein transport</keyword>
<keyword id="KW-1185">Reference proteome</keyword>
<keyword id="KW-0813">Transport</keyword>
<reference key="1">
    <citation type="journal article" date="1994" name="Biochim. Biophys. Acta">
        <title>Yeast homologue of mammalian Ran binding protein 1.</title>
        <authorList>
            <person name="Butler G."/>
            <person name="Wolfe K.H."/>
        </authorList>
    </citation>
    <scope>NUCLEOTIDE SEQUENCE [GENOMIC DNA]</scope>
    <source>
        <strain>H9</strain>
    </source>
</reference>
<reference key="2">
    <citation type="journal article" date="1993" name="J. Biol. Chem.">
        <title>Molecular analysis of the neutral trehalase gene from Saccharomyces cerevisiae.</title>
        <authorList>
            <person name="Kopp M."/>
            <person name="Mueller H."/>
            <person name="Holzer H."/>
        </authorList>
    </citation>
    <scope>NUCLEOTIDE SEQUENCE [GENOMIC DNA]</scope>
</reference>
<reference key="3">
    <citation type="journal article" date="1995" name="J. Biol. Chem.">
        <title>Ran-binding protein-1 is an essential component of the Ran/RCC1 molecular switch system in budding yeast.</title>
        <authorList>
            <person name="Ouspenski I.I."/>
            <person name="Mueller U.W."/>
            <person name="Matynia A."/>
            <person name="Sazer S."/>
            <person name="Elledge S.J."/>
            <person name="Brinkley B.R."/>
        </authorList>
    </citation>
    <scope>NUCLEOTIDE SEQUENCE [GENOMIC DNA]</scope>
    <scope>CHARACTERIZATION</scope>
</reference>
<reference key="4">
    <citation type="submission" date="1994-12" db="EMBL/GenBank/DDBJ databases">
        <authorList>
            <person name="Trueheart J."/>
            <person name="Richards S."/>
            <person name="Macara I.G."/>
            <person name="Thorner J."/>
        </authorList>
    </citation>
    <scope>NUCLEOTIDE SEQUENCE [GENOMIC DNA]</scope>
</reference>
<reference key="5">
    <citation type="journal article" date="1997" name="Nature">
        <title>The nucleotide sequence of Saccharomyces cerevisiae chromosome IV.</title>
        <authorList>
            <person name="Jacq C."/>
            <person name="Alt-Moerbe J."/>
            <person name="Andre B."/>
            <person name="Arnold W."/>
            <person name="Bahr A."/>
            <person name="Ballesta J.P.G."/>
            <person name="Bargues M."/>
            <person name="Baron L."/>
            <person name="Becker A."/>
            <person name="Biteau N."/>
            <person name="Bloecker H."/>
            <person name="Blugeon C."/>
            <person name="Boskovic J."/>
            <person name="Brandt P."/>
            <person name="Brueckner M."/>
            <person name="Buitrago M.J."/>
            <person name="Coster F."/>
            <person name="Delaveau T."/>
            <person name="del Rey F."/>
            <person name="Dujon B."/>
            <person name="Eide L.G."/>
            <person name="Garcia-Cantalejo J.M."/>
            <person name="Goffeau A."/>
            <person name="Gomez-Peris A."/>
            <person name="Granotier C."/>
            <person name="Hanemann V."/>
            <person name="Hankeln T."/>
            <person name="Hoheisel J.D."/>
            <person name="Jaeger W."/>
            <person name="Jimenez A."/>
            <person name="Jonniaux J.-L."/>
            <person name="Kraemer C."/>
            <person name="Kuester H."/>
            <person name="Laamanen P."/>
            <person name="Legros Y."/>
            <person name="Louis E.J."/>
            <person name="Moeller-Rieker S."/>
            <person name="Monnet A."/>
            <person name="Moro M."/>
            <person name="Mueller-Auer S."/>
            <person name="Nussbaumer B."/>
            <person name="Paricio N."/>
            <person name="Paulin L."/>
            <person name="Perea J."/>
            <person name="Perez-Alonso M."/>
            <person name="Perez-Ortin J.E."/>
            <person name="Pohl T.M."/>
            <person name="Prydz H."/>
            <person name="Purnelle B."/>
            <person name="Rasmussen S.W."/>
            <person name="Remacha M.A."/>
            <person name="Revuelta J.L."/>
            <person name="Rieger M."/>
            <person name="Salom D."/>
            <person name="Saluz H.P."/>
            <person name="Saiz J.E."/>
            <person name="Saren A.-M."/>
            <person name="Schaefer M."/>
            <person name="Scharfe M."/>
            <person name="Schmidt E.R."/>
            <person name="Schneider C."/>
            <person name="Scholler P."/>
            <person name="Schwarz S."/>
            <person name="Soler-Mira A."/>
            <person name="Urrestarazu L.A."/>
            <person name="Verhasselt P."/>
            <person name="Vissers S."/>
            <person name="Voet M."/>
            <person name="Volckaert G."/>
            <person name="Wagner G."/>
            <person name="Wambutt R."/>
            <person name="Wedler E."/>
            <person name="Wedler H."/>
            <person name="Woelfl S."/>
            <person name="Harris D.E."/>
            <person name="Bowman S."/>
            <person name="Brown D."/>
            <person name="Churcher C.M."/>
            <person name="Connor R."/>
            <person name="Dedman K."/>
            <person name="Gentles S."/>
            <person name="Hamlin N."/>
            <person name="Hunt S."/>
            <person name="Jones L."/>
            <person name="McDonald S."/>
            <person name="Murphy L.D."/>
            <person name="Niblett D."/>
            <person name="Odell C."/>
            <person name="Oliver K."/>
            <person name="Rajandream M.A."/>
            <person name="Richards C."/>
            <person name="Shore L."/>
            <person name="Walsh S.V."/>
            <person name="Barrell B.G."/>
            <person name="Dietrich F.S."/>
            <person name="Mulligan J.T."/>
            <person name="Allen E."/>
            <person name="Araujo R."/>
            <person name="Aviles E."/>
            <person name="Berno A."/>
            <person name="Carpenter J."/>
            <person name="Chen E."/>
            <person name="Cherry J.M."/>
            <person name="Chung E."/>
            <person name="Duncan M."/>
            <person name="Hunicke-Smith S."/>
            <person name="Hyman R.W."/>
            <person name="Komp C."/>
            <person name="Lashkari D."/>
            <person name="Lew H."/>
            <person name="Lin D."/>
            <person name="Mosedale D."/>
            <person name="Nakahara K."/>
            <person name="Namath A."/>
            <person name="Oefner P."/>
            <person name="Oh C."/>
            <person name="Petel F.X."/>
            <person name="Roberts D."/>
            <person name="Schramm S."/>
            <person name="Schroeder M."/>
            <person name="Shogren T."/>
            <person name="Shroff N."/>
            <person name="Winant A."/>
            <person name="Yelton M.A."/>
            <person name="Botstein D."/>
            <person name="Davis R.W."/>
            <person name="Johnston M."/>
            <person name="Andrews S."/>
            <person name="Brinkman R."/>
            <person name="Cooper J."/>
            <person name="Ding H."/>
            <person name="Du Z."/>
            <person name="Favello A."/>
            <person name="Fulton L."/>
            <person name="Gattung S."/>
            <person name="Greco T."/>
            <person name="Hallsworth K."/>
            <person name="Hawkins J."/>
            <person name="Hillier L.W."/>
            <person name="Jier M."/>
            <person name="Johnson D."/>
            <person name="Johnston L."/>
            <person name="Kirsten J."/>
            <person name="Kucaba T."/>
            <person name="Langston Y."/>
            <person name="Latreille P."/>
            <person name="Le T."/>
            <person name="Mardis E."/>
            <person name="Menezes S."/>
            <person name="Miller N."/>
            <person name="Nhan M."/>
            <person name="Pauley A."/>
            <person name="Peluso D."/>
            <person name="Rifkin L."/>
            <person name="Riles L."/>
            <person name="Taich A."/>
            <person name="Trevaskis E."/>
            <person name="Vignati D."/>
            <person name="Wilcox L."/>
            <person name="Wohldman P."/>
            <person name="Vaudin M."/>
            <person name="Wilson R."/>
            <person name="Waterston R."/>
            <person name="Albermann K."/>
            <person name="Hani J."/>
            <person name="Heumann K."/>
            <person name="Kleine K."/>
            <person name="Mewes H.-W."/>
            <person name="Zollner A."/>
            <person name="Zaccaria P."/>
        </authorList>
    </citation>
    <scope>NUCLEOTIDE SEQUENCE [LARGE SCALE GENOMIC DNA]</scope>
    <source>
        <strain>ATCC 204508 / S288c</strain>
    </source>
</reference>
<reference key="6">
    <citation type="journal article" date="2014" name="G3 (Bethesda)">
        <title>The reference genome sequence of Saccharomyces cerevisiae: Then and now.</title>
        <authorList>
            <person name="Engel S.R."/>
            <person name="Dietrich F.S."/>
            <person name="Fisk D.G."/>
            <person name="Binkley G."/>
            <person name="Balakrishnan R."/>
            <person name="Costanzo M.C."/>
            <person name="Dwight S.S."/>
            <person name="Hitz B.C."/>
            <person name="Karra K."/>
            <person name="Nash R.S."/>
            <person name="Weng S."/>
            <person name="Wong E.D."/>
            <person name="Lloyd P."/>
            <person name="Skrzypek M.S."/>
            <person name="Miyasato S.R."/>
            <person name="Simison M."/>
            <person name="Cherry J.M."/>
        </authorList>
    </citation>
    <scope>GENOME REANNOTATION</scope>
    <source>
        <strain>ATCC 204508 / S288c</strain>
    </source>
</reference>
<reference key="7">
    <citation type="journal article" date="1995" name="EMBO J.">
        <title>Mutants in a yeast Ran binding protein are defective in nuclear transport.</title>
        <authorList>
            <person name="Schlenstedt G."/>
            <person name="Wong D.H."/>
            <person name="Koepp D.M."/>
            <person name="Silver P.A."/>
        </authorList>
    </citation>
    <scope>CHARACTERIZATION</scope>
</reference>
<reference key="8">
    <citation type="journal article" date="2000" name="Mol. Cell. Biol.">
        <title>Yeast Ran-binding protein 1 (Yrb1) shuttles between the nucleus and cytoplasm and is exported from the nucleus via a CRM1 (XPO1)-dependent pathway.</title>
        <authorList>
            <person name="Kunzler M."/>
            <person name="Gerstberger T."/>
            <person name="Stutz F."/>
            <person name="Bischoff F.R."/>
            <person name="Hurt E."/>
        </authorList>
    </citation>
    <scope>CHARACTERIZATION</scope>
</reference>
<reference key="9">
    <citation type="journal article" date="2007" name="J. Proteome Res.">
        <title>Large-scale phosphorylation analysis of alpha-factor-arrested Saccharomyces cerevisiae.</title>
        <authorList>
            <person name="Li X."/>
            <person name="Gerber S.A."/>
            <person name="Rudner A.D."/>
            <person name="Beausoleil S.A."/>
            <person name="Haas W."/>
            <person name="Villen J."/>
            <person name="Elias J.E."/>
            <person name="Gygi S.P."/>
        </authorList>
    </citation>
    <scope>PHOSPHORYLATION [LARGE SCALE ANALYSIS] AT SER-60</scope>
    <scope>IDENTIFICATION BY MASS SPECTROMETRY [LARGE SCALE ANALYSIS]</scope>
    <source>
        <strain>ADR376</strain>
    </source>
</reference>
<reference key="10">
    <citation type="journal article" date="2007" name="Proc. Natl. Acad. Sci. U.S.A.">
        <title>Analysis of phosphorylation sites on proteins from Saccharomyces cerevisiae by electron transfer dissociation (ETD) mass spectrometry.</title>
        <authorList>
            <person name="Chi A."/>
            <person name="Huttenhower C."/>
            <person name="Geer L.Y."/>
            <person name="Coon J.J."/>
            <person name="Syka J.E.P."/>
            <person name="Bai D.L."/>
            <person name="Shabanowitz J."/>
            <person name="Burke D.J."/>
            <person name="Troyanskaya O.G."/>
            <person name="Hunt D.F."/>
        </authorList>
    </citation>
    <scope>PHOSPHORYLATION [LARGE SCALE ANALYSIS] AT SER-60</scope>
    <scope>IDENTIFICATION BY MASS SPECTROMETRY [LARGE SCALE ANALYSIS]</scope>
</reference>
<reference key="11">
    <citation type="journal article" date="2008" name="Mol. Cell. Proteomics">
        <title>A multidimensional chromatography technology for in-depth phosphoproteome analysis.</title>
        <authorList>
            <person name="Albuquerque C.P."/>
            <person name="Smolka M.B."/>
            <person name="Payne S.H."/>
            <person name="Bafna V."/>
            <person name="Eng J."/>
            <person name="Zhou H."/>
        </authorList>
    </citation>
    <scope>PHOSPHORYLATION [LARGE SCALE ANALYSIS] AT SER-60</scope>
    <scope>IDENTIFICATION BY MASS SPECTROMETRY [LARGE SCALE ANALYSIS]</scope>
</reference>
<reference key="12">
    <citation type="journal article" date="2009" name="Science">
        <title>Global analysis of Cdk1 substrate phosphorylation sites provides insights into evolution.</title>
        <authorList>
            <person name="Holt L.J."/>
            <person name="Tuch B.B."/>
            <person name="Villen J."/>
            <person name="Johnson A.D."/>
            <person name="Gygi S.P."/>
            <person name="Morgan D.O."/>
        </authorList>
    </citation>
    <scope>PHOSPHORYLATION [LARGE SCALE ANALYSIS] AT SER-60</scope>
    <scope>IDENTIFICATION BY MASS SPECTROMETRY [LARGE SCALE ANALYSIS]</scope>
</reference>
<dbReference type="EMBL" id="Z33503">
    <property type="protein sequence ID" value="CAA83911.1"/>
    <property type="molecule type" value="Genomic_DNA"/>
</dbReference>
<dbReference type="EMBL" id="X65925">
    <property type="status" value="NOT_ANNOTATED_CDS"/>
    <property type="molecule type" value="Genomic_DNA"/>
</dbReference>
<dbReference type="EMBL" id="L38489">
    <property type="protein sequence ID" value="AAA57276.1"/>
    <property type="molecule type" value="Genomic_DNA"/>
</dbReference>
<dbReference type="EMBL" id="Z48008">
    <property type="protein sequence ID" value="CAA88062.1"/>
    <property type="molecule type" value="Genomic_DNA"/>
</dbReference>
<dbReference type="EMBL" id="BK006938">
    <property type="protein sequence ID" value="DAA11849.1"/>
    <property type="molecule type" value="Genomic_DNA"/>
</dbReference>
<dbReference type="PIR" id="S50219">
    <property type="entry name" value="S50219"/>
</dbReference>
<dbReference type="RefSeq" id="NP_010285.1">
    <property type="nucleotide sequence ID" value="NM_001180310.1"/>
</dbReference>
<dbReference type="PDB" id="3M1I">
    <property type="method" value="X-ray"/>
    <property type="resolution" value="2.00 A"/>
    <property type="chains" value="B=11-201"/>
</dbReference>
<dbReference type="PDB" id="4GMX">
    <property type="method" value="X-ray"/>
    <property type="resolution" value="2.10 A"/>
    <property type="chains" value="B=62-201"/>
</dbReference>
<dbReference type="PDB" id="4GPT">
    <property type="method" value="X-ray"/>
    <property type="resolution" value="2.22 A"/>
    <property type="chains" value="B=62-201"/>
</dbReference>
<dbReference type="PDB" id="4HAT">
    <property type="method" value="X-ray"/>
    <property type="resolution" value="1.78 A"/>
    <property type="chains" value="B=62-201"/>
</dbReference>
<dbReference type="PDB" id="4HAU">
    <property type="method" value="X-ray"/>
    <property type="resolution" value="2.00 A"/>
    <property type="chains" value="B=62-201"/>
</dbReference>
<dbReference type="PDB" id="4HAV">
    <property type="method" value="X-ray"/>
    <property type="resolution" value="2.00 A"/>
    <property type="chains" value="B=62-201"/>
</dbReference>
<dbReference type="PDB" id="4HAW">
    <property type="method" value="X-ray"/>
    <property type="resolution" value="1.90 A"/>
    <property type="chains" value="B=62-201"/>
</dbReference>
<dbReference type="PDB" id="4HAX">
    <property type="method" value="X-ray"/>
    <property type="resolution" value="2.28 A"/>
    <property type="chains" value="B=62-201"/>
</dbReference>
<dbReference type="PDB" id="4HAY">
    <property type="method" value="X-ray"/>
    <property type="resolution" value="2.30 A"/>
    <property type="chains" value="B=62-201"/>
</dbReference>
<dbReference type="PDB" id="4HAZ">
    <property type="method" value="X-ray"/>
    <property type="resolution" value="1.90 A"/>
    <property type="chains" value="B=62-201"/>
</dbReference>
<dbReference type="PDB" id="4HB0">
    <property type="method" value="X-ray"/>
    <property type="resolution" value="2.20 A"/>
    <property type="chains" value="B=62-201"/>
</dbReference>
<dbReference type="PDB" id="4HB2">
    <property type="method" value="X-ray"/>
    <property type="resolution" value="1.80 A"/>
    <property type="chains" value="B=62-201"/>
</dbReference>
<dbReference type="PDB" id="4HB3">
    <property type="method" value="X-ray"/>
    <property type="resolution" value="2.80 A"/>
    <property type="chains" value="B=62-201"/>
</dbReference>
<dbReference type="PDB" id="4HB4">
    <property type="method" value="X-ray"/>
    <property type="resolution" value="2.05 A"/>
    <property type="chains" value="B=62-201"/>
</dbReference>
<dbReference type="PDB" id="4WVF">
    <property type="method" value="X-ray"/>
    <property type="resolution" value="1.80 A"/>
    <property type="chains" value="B=62-201"/>
</dbReference>
<dbReference type="PDB" id="5DH9">
    <property type="method" value="X-ray"/>
    <property type="resolution" value="2.55 A"/>
    <property type="chains" value="B=62-201"/>
</dbReference>
<dbReference type="PDB" id="5DHA">
    <property type="method" value="X-ray"/>
    <property type="resolution" value="2.95 A"/>
    <property type="chains" value="B=62-201"/>
</dbReference>
<dbReference type="PDB" id="5DHF">
    <property type="method" value="X-ray"/>
    <property type="resolution" value="2.29 A"/>
    <property type="chains" value="B=62-201"/>
</dbReference>
<dbReference type="PDB" id="5DI9">
    <property type="method" value="X-ray"/>
    <property type="resolution" value="2.28 A"/>
    <property type="chains" value="B=62-201"/>
</dbReference>
<dbReference type="PDB" id="5DIF">
    <property type="method" value="X-ray"/>
    <property type="resolution" value="2.09 A"/>
    <property type="chains" value="B=62-201"/>
</dbReference>
<dbReference type="PDB" id="5JLJ">
    <property type="method" value="X-ray"/>
    <property type="resolution" value="2.50 A"/>
    <property type="chains" value="B=62-201"/>
</dbReference>
<dbReference type="PDB" id="5UWH">
    <property type="method" value="X-ray"/>
    <property type="resolution" value="2.26 A"/>
    <property type="chains" value="B=62-201"/>
</dbReference>
<dbReference type="PDB" id="5UWI">
    <property type="method" value="X-ray"/>
    <property type="resolution" value="2.14 A"/>
    <property type="chains" value="B=62-201"/>
</dbReference>
<dbReference type="PDB" id="5UWJ">
    <property type="method" value="X-ray"/>
    <property type="resolution" value="2.22 A"/>
    <property type="chains" value="B=62-201"/>
</dbReference>
<dbReference type="PDB" id="5UWO">
    <property type="method" value="X-ray"/>
    <property type="resolution" value="2.35 A"/>
    <property type="chains" value="B=62-201"/>
</dbReference>
<dbReference type="PDB" id="5UWP">
    <property type="method" value="X-ray"/>
    <property type="resolution" value="2.05 A"/>
    <property type="chains" value="B=62-201"/>
</dbReference>
<dbReference type="PDB" id="5UWQ">
    <property type="method" value="X-ray"/>
    <property type="resolution" value="2.28 A"/>
    <property type="chains" value="B=62-201"/>
</dbReference>
<dbReference type="PDB" id="5UWR">
    <property type="method" value="X-ray"/>
    <property type="resolution" value="2.24 A"/>
    <property type="chains" value="B=62-201"/>
</dbReference>
<dbReference type="PDB" id="5UWS">
    <property type="method" value="X-ray"/>
    <property type="resolution" value="2.40 A"/>
    <property type="chains" value="B=62-201"/>
</dbReference>
<dbReference type="PDB" id="5UWT">
    <property type="method" value="X-ray"/>
    <property type="resolution" value="2.34 A"/>
    <property type="chains" value="B=62-201"/>
</dbReference>
<dbReference type="PDB" id="5UWU">
    <property type="method" value="X-ray"/>
    <property type="resolution" value="2.24 A"/>
    <property type="chains" value="B=62-201"/>
</dbReference>
<dbReference type="PDB" id="5UWW">
    <property type="method" value="X-ray"/>
    <property type="resolution" value="2.15 A"/>
    <property type="chains" value="B=62-201"/>
</dbReference>
<dbReference type="PDB" id="5YRO">
    <property type="method" value="X-ray"/>
    <property type="resolution" value="2.40 A"/>
    <property type="chains" value="B=62-201"/>
</dbReference>
<dbReference type="PDB" id="5YST">
    <property type="method" value="X-ray"/>
    <property type="resolution" value="2.04 A"/>
    <property type="chains" value="B=62-200"/>
</dbReference>
<dbReference type="PDB" id="5YSU">
    <property type="method" value="X-ray"/>
    <property type="resolution" value="2.30 A"/>
    <property type="chains" value="B=62-200"/>
</dbReference>
<dbReference type="PDB" id="5YTB">
    <property type="method" value="X-ray"/>
    <property type="resolution" value="2.30 A"/>
    <property type="chains" value="B=62-200"/>
</dbReference>
<dbReference type="PDB" id="5ZPU">
    <property type="method" value="X-ray"/>
    <property type="resolution" value="2.60 A"/>
    <property type="chains" value="B=62-201"/>
</dbReference>
<dbReference type="PDB" id="6A38">
    <property type="method" value="X-ray"/>
    <property type="resolution" value="2.69 A"/>
    <property type="chains" value="B=62-201"/>
</dbReference>
<dbReference type="PDB" id="6A3A">
    <property type="method" value="X-ray"/>
    <property type="resolution" value="2.30 A"/>
    <property type="chains" value="B=62-201"/>
</dbReference>
<dbReference type="PDB" id="6A3B">
    <property type="method" value="X-ray"/>
    <property type="resolution" value="2.51 A"/>
    <property type="chains" value="B=62-201"/>
</dbReference>
<dbReference type="PDB" id="6A3C">
    <property type="method" value="X-ray"/>
    <property type="resolution" value="2.35 A"/>
    <property type="chains" value="B=62-201"/>
</dbReference>
<dbReference type="PDB" id="6A3E">
    <property type="method" value="X-ray"/>
    <property type="resolution" value="2.70 A"/>
    <property type="chains" value="B=62-201"/>
</dbReference>
<dbReference type="PDB" id="6CIT">
    <property type="method" value="X-ray"/>
    <property type="resolution" value="2.03 A"/>
    <property type="chains" value="B=62-201"/>
</dbReference>
<dbReference type="PDB" id="6KFT">
    <property type="method" value="X-ray"/>
    <property type="resolution" value="2.51 A"/>
    <property type="chains" value="B=62-201"/>
</dbReference>
<dbReference type="PDB" id="6LQ9">
    <property type="method" value="X-ray"/>
    <property type="resolution" value="2.50 A"/>
    <property type="chains" value="B=62-201"/>
</dbReference>
<dbReference type="PDB" id="6M60">
    <property type="method" value="X-ray"/>
    <property type="resolution" value="2.17 A"/>
    <property type="chains" value="B=62-201"/>
</dbReference>
<dbReference type="PDB" id="6M6X">
    <property type="method" value="X-ray"/>
    <property type="resolution" value="2.88 A"/>
    <property type="chains" value="B=62-201"/>
</dbReference>
<dbReference type="PDB" id="6X2M">
    <property type="method" value="X-ray"/>
    <property type="resolution" value="2.35 A"/>
    <property type="chains" value="B=62-201"/>
</dbReference>
<dbReference type="PDB" id="6X2O">
    <property type="method" value="X-ray"/>
    <property type="resolution" value="2.55 A"/>
    <property type="chains" value="B=62-201"/>
</dbReference>
<dbReference type="PDB" id="6X2P">
    <property type="method" value="X-ray"/>
    <property type="resolution" value="2.40 A"/>
    <property type="chains" value="B=62-201"/>
</dbReference>
<dbReference type="PDB" id="6X2R">
    <property type="method" value="X-ray"/>
    <property type="resolution" value="2.30 A"/>
    <property type="chains" value="B=62-201"/>
</dbReference>
<dbReference type="PDB" id="6X2S">
    <property type="method" value="X-ray"/>
    <property type="resolution" value="2.50 A"/>
    <property type="chains" value="B=62-201"/>
</dbReference>
<dbReference type="PDB" id="6X2U">
    <property type="method" value="X-ray"/>
    <property type="resolution" value="2.20 A"/>
    <property type="chains" value="B=62-201"/>
</dbReference>
<dbReference type="PDB" id="6X2V">
    <property type="method" value="X-ray"/>
    <property type="resolution" value="2.82 A"/>
    <property type="chains" value="B=62-201"/>
</dbReference>
<dbReference type="PDB" id="6X2W">
    <property type="method" value="X-ray"/>
    <property type="resolution" value="3.00 A"/>
    <property type="chains" value="B=62-201"/>
</dbReference>
<dbReference type="PDB" id="6X2X">
    <property type="method" value="X-ray"/>
    <property type="resolution" value="2.46 A"/>
    <property type="chains" value="B=62-201"/>
</dbReference>
<dbReference type="PDB" id="6X2Y">
    <property type="method" value="X-ray"/>
    <property type="resolution" value="2.30 A"/>
    <property type="chains" value="B=62-201"/>
</dbReference>
<dbReference type="PDB" id="6XJP">
    <property type="method" value="X-ray"/>
    <property type="resolution" value="2.80 A"/>
    <property type="chains" value="B=62-201"/>
</dbReference>
<dbReference type="PDB" id="6XJR">
    <property type="method" value="X-ray"/>
    <property type="resolution" value="1.94 A"/>
    <property type="chains" value="B=62-201"/>
</dbReference>
<dbReference type="PDB" id="6XJS">
    <property type="method" value="X-ray"/>
    <property type="resolution" value="1.94 A"/>
    <property type="chains" value="B=62-201"/>
</dbReference>
<dbReference type="PDB" id="6XJT">
    <property type="method" value="X-ray"/>
    <property type="resolution" value="2.41 A"/>
    <property type="chains" value="B=62-201"/>
</dbReference>
<dbReference type="PDB" id="6XJU">
    <property type="method" value="X-ray"/>
    <property type="resolution" value="2.19 A"/>
    <property type="chains" value="B=62-201"/>
</dbReference>
<dbReference type="PDB" id="7CND">
    <property type="method" value="X-ray"/>
    <property type="resolution" value="1.80 A"/>
    <property type="chains" value="B=62-201"/>
</dbReference>
<dbReference type="PDB" id="7DBG">
    <property type="method" value="X-ray"/>
    <property type="resolution" value="2.06 A"/>
    <property type="chains" value="B=62-201"/>
</dbReference>
<dbReference type="PDB" id="7L5E">
    <property type="method" value="X-ray"/>
    <property type="resolution" value="1.94 A"/>
    <property type="chains" value="B=62-201"/>
</dbReference>
<dbReference type="PDB" id="7YPZ">
    <property type="method" value="X-ray"/>
    <property type="resolution" value="2.15 A"/>
    <property type="chains" value="B=62-201"/>
</dbReference>
<dbReference type="PDB" id="8HQ3">
    <property type="method" value="X-ray"/>
    <property type="resolution" value="2.10 A"/>
    <property type="chains" value="B=62-201"/>
</dbReference>
<dbReference type="PDB" id="8HQ4">
    <property type="method" value="X-ray"/>
    <property type="resolution" value="2.12 A"/>
    <property type="chains" value="B=62-201"/>
</dbReference>
<dbReference type="PDB" id="8HQ5">
    <property type="method" value="X-ray"/>
    <property type="resolution" value="2.25 A"/>
    <property type="chains" value="B=62-201"/>
</dbReference>
<dbReference type="PDB" id="8HQ6">
    <property type="method" value="X-ray"/>
    <property type="resolution" value="2.03 A"/>
    <property type="chains" value="B=62-201"/>
</dbReference>
<dbReference type="PDB" id="8HUF">
    <property type="method" value="X-ray"/>
    <property type="resolution" value="2.29 A"/>
    <property type="chains" value="B=62-201"/>
</dbReference>
<dbReference type="PDB" id="8HUG">
    <property type="method" value="X-ray"/>
    <property type="resolution" value="2.15 A"/>
    <property type="chains" value="B=62-201"/>
</dbReference>
<dbReference type="PDB" id="8ITV">
    <property type="method" value="X-ray"/>
    <property type="resolution" value="2.30 A"/>
    <property type="chains" value="B=62-201"/>
</dbReference>
<dbReference type="PDBsum" id="3M1I"/>
<dbReference type="PDBsum" id="4GMX"/>
<dbReference type="PDBsum" id="4GPT"/>
<dbReference type="PDBsum" id="4HAT"/>
<dbReference type="PDBsum" id="4HAU"/>
<dbReference type="PDBsum" id="4HAV"/>
<dbReference type="PDBsum" id="4HAW"/>
<dbReference type="PDBsum" id="4HAX"/>
<dbReference type="PDBsum" id="4HAY"/>
<dbReference type="PDBsum" id="4HAZ"/>
<dbReference type="PDBsum" id="4HB0"/>
<dbReference type="PDBsum" id="4HB2"/>
<dbReference type="PDBsum" id="4HB3"/>
<dbReference type="PDBsum" id="4HB4"/>
<dbReference type="PDBsum" id="4WVF"/>
<dbReference type="PDBsum" id="5DH9"/>
<dbReference type="PDBsum" id="5DHA"/>
<dbReference type="PDBsum" id="5DHF"/>
<dbReference type="PDBsum" id="5DI9"/>
<dbReference type="PDBsum" id="5DIF"/>
<dbReference type="PDBsum" id="5JLJ"/>
<dbReference type="PDBsum" id="5UWH"/>
<dbReference type="PDBsum" id="5UWI"/>
<dbReference type="PDBsum" id="5UWJ"/>
<dbReference type="PDBsum" id="5UWO"/>
<dbReference type="PDBsum" id="5UWP"/>
<dbReference type="PDBsum" id="5UWQ"/>
<dbReference type="PDBsum" id="5UWR"/>
<dbReference type="PDBsum" id="5UWS"/>
<dbReference type="PDBsum" id="5UWT"/>
<dbReference type="PDBsum" id="5UWU"/>
<dbReference type="PDBsum" id="5UWW"/>
<dbReference type="PDBsum" id="5YRO"/>
<dbReference type="PDBsum" id="5YST"/>
<dbReference type="PDBsum" id="5YSU"/>
<dbReference type="PDBsum" id="5YTB"/>
<dbReference type="PDBsum" id="5ZPU"/>
<dbReference type="PDBsum" id="6A38"/>
<dbReference type="PDBsum" id="6A3A"/>
<dbReference type="PDBsum" id="6A3B"/>
<dbReference type="PDBsum" id="6A3C"/>
<dbReference type="PDBsum" id="6A3E"/>
<dbReference type="PDBsum" id="6CIT"/>
<dbReference type="PDBsum" id="6KFT"/>
<dbReference type="PDBsum" id="6LQ9"/>
<dbReference type="PDBsum" id="6M60"/>
<dbReference type="PDBsum" id="6M6X"/>
<dbReference type="PDBsum" id="6X2M"/>
<dbReference type="PDBsum" id="6X2O"/>
<dbReference type="PDBsum" id="6X2P"/>
<dbReference type="PDBsum" id="6X2R"/>
<dbReference type="PDBsum" id="6X2S"/>
<dbReference type="PDBsum" id="6X2U"/>
<dbReference type="PDBsum" id="6X2V"/>
<dbReference type="PDBsum" id="6X2W"/>
<dbReference type="PDBsum" id="6X2X"/>
<dbReference type="PDBsum" id="6X2Y"/>
<dbReference type="PDBsum" id="6XJP"/>
<dbReference type="PDBsum" id="6XJR"/>
<dbReference type="PDBsum" id="6XJS"/>
<dbReference type="PDBsum" id="6XJT"/>
<dbReference type="PDBsum" id="6XJU"/>
<dbReference type="PDBsum" id="7CND"/>
<dbReference type="PDBsum" id="7DBG"/>
<dbReference type="PDBsum" id="7L5E"/>
<dbReference type="PDBsum" id="7YPZ"/>
<dbReference type="PDBsum" id="8HQ3"/>
<dbReference type="PDBsum" id="8HQ4"/>
<dbReference type="PDBsum" id="8HQ5"/>
<dbReference type="PDBsum" id="8HQ6"/>
<dbReference type="PDBsum" id="8HUF"/>
<dbReference type="PDBsum" id="8HUG"/>
<dbReference type="PDBsum" id="8ITV"/>
<dbReference type="SMR" id="P41920"/>
<dbReference type="BioGRID" id="32055">
    <property type="interactions" value="271"/>
</dbReference>
<dbReference type="DIP" id="DIP-838N"/>
<dbReference type="FunCoup" id="P41920">
    <property type="interactions" value="1225"/>
</dbReference>
<dbReference type="IntAct" id="P41920">
    <property type="interactions" value="7"/>
</dbReference>
<dbReference type="MINT" id="P41920"/>
<dbReference type="STRING" id="4932.YDR002W"/>
<dbReference type="iPTMnet" id="P41920"/>
<dbReference type="PaxDb" id="4932-YDR002W"/>
<dbReference type="PeptideAtlas" id="P41920"/>
<dbReference type="EnsemblFungi" id="YDR002W_mRNA">
    <property type="protein sequence ID" value="YDR002W"/>
    <property type="gene ID" value="YDR002W"/>
</dbReference>
<dbReference type="GeneID" id="851565"/>
<dbReference type="KEGG" id="sce:YDR002W"/>
<dbReference type="AGR" id="SGD:S000002409"/>
<dbReference type="SGD" id="S000002409">
    <property type="gene designation" value="YRB1"/>
</dbReference>
<dbReference type="VEuPathDB" id="FungiDB:YDR002W"/>
<dbReference type="eggNOG" id="KOG0864">
    <property type="taxonomic scope" value="Eukaryota"/>
</dbReference>
<dbReference type="GeneTree" id="ENSGT00900000141073"/>
<dbReference type="HOGENOM" id="CLU_067861_2_1_1"/>
<dbReference type="InParanoid" id="P41920"/>
<dbReference type="OMA" id="NFKDSFM"/>
<dbReference type="OrthoDB" id="2357150at2759"/>
<dbReference type="BioCyc" id="YEAST:G3O-29624-MONOMER"/>
<dbReference type="Reactome" id="R-SCE-159236">
    <property type="pathway name" value="Transport of Mature mRNA derived from an Intron-Containing Transcript"/>
</dbReference>
<dbReference type="Reactome" id="R-SCE-3371453">
    <property type="pathway name" value="Regulation of HSF1-mediated heat shock response"/>
</dbReference>
<dbReference type="Reactome" id="R-SCE-4085377">
    <property type="pathway name" value="SUMOylation of SUMOylation proteins"/>
</dbReference>
<dbReference type="Reactome" id="R-SCE-4551638">
    <property type="pathway name" value="SUMOylation of chromatin organization proteins"/>
</dbReference>
<dbReference type="Reactome" id="R-SCE-4570464">
    <property type="pathway name" value="SUMOylation of RNA binding proteins"/>
</dbReference>
<dbReference type="BioGRID-ORCS" id="851565">
    <property type="hits" value="2 hits in 10 CRISPR screens"/>
</dbReference>
<dbReference type="EvolutionaryTrace" id="P41920"/>
<dbReference type="PRO" id="PR:P41920"/>
<dbReference type="Proteomes" id="UP000002311">
    <property type="component" value="Chromosome IV"/>
</dbReference>
<dbReference type="RNAct" id="P41920">
    <property type="molecule type" value="protein"/>
</dbReference>
<dbReference type="GO" id="GO:0005737">
    <property type="term" value="C:cytoplasm"/>
    <property type="evidence" value="ECO:0000314"/>
    <property type="project" value="SGD"/>
</dbReference>
<dbReference type="GO" id="GO:0005643">
    <property type="term" value="C:nuclear pore"/>
    <property type="evidence" value="ECO:0000318"/>
    <property type="project" value="GO_Central"/>
</dbReference>
<dbReference type="GO" id="GO:0005634">
    <property type="term" value="C:nucleus"/>
    <property type="evidence" value="ECO:0000314"/>
    <property type="project" value="SGD"/>
</dbReference>
<dbReference type="GO" id="GO:0005096">
    <property type="term" value="F:GTPase activator activity"/>
    <property type="evidence" value="ECO:0007669"/>
    <property type="project" value="UniProtKB-KW"/>
</dbReference>
<dbReference type="GO" id="GO:0031267">
    <property type="term" value="F:small GTPase binding"/>
    <property type="evidence" value="ECO:0000314"/>
    <property type="project" value="SGD"/>
</dbReference>
<dbReference type="GO" id="GO:0000082">
    <property type="term" value="P:G1/S transition of mitotic cell cycle"/>
    <property type="evidence" value="ECO:0000315"/>
    <property type="project" value="SGD"/>
</dbReference>
<dbReference type="GO" id="GO:0006606">
    <property type="term" value="P:protein import into nucleus"/>
    <property type="evidence" value="ECO:0000315"/>
    <property type="project" value="SGD"/>
</dbReference>
<dbReference type="GO" id="GO:0006405">
    <property type="term" value="P:RNA export from nucleus"/>
    <property type="evidence" value="ECO:0000315"/>
    <property type="project" value="SGD"/>
</dbReference>
<dbReference type="GO" id="GO:0006511">
    <property type="term" value="P:ubiquitin-dependent protein catabolic process"/>
    <property type="evidence" value="ECO:0000315"/>
    <property type="project" value="SGD"/>
</dbReference>
<dbReference type="CDD" id="cd13179">
    <property type="entry name" value="RanBD_RanBP1"/>
    <property type="match status" value="1"/>
</dbReference>
<dbReference type="FunFam" id="2.30.29.30:FF:000483">
    <property type="entry name" value="Ran-specific GTPase-activating protein 1"/>
    <property type="match status" value="1"/>
</dbReference>
<dbReference type="Gene3D" id="2.30.29.30">
    <property type="entry name" value="Pleckstrin-homology domain (PH domain)/Phosphotyrosine-binding domain (PTB)"/>
    <property type="match status" value="1"/>
</dbReference>
<dbReference type="IDEAL" id="IID50175"/>
<dbReference type="InterPro" id="IPR011993">
    <property type="entry name" value="PH-like_dom_sf"/>
</dbReference>
<dbReference type="InterPro" id="IPR000156">
    <property type="entry name" value="Ran_bind_dom"/>
</dbReference>
<dbReference type="InterPro" id="IPR045255">
    <property type="entry name" value="RanBP1-like"/>
</dbReference>
<dbReference type="InterPro" id="IPR045256">
    <property type="entry name" value="RanBP1_RanBD"/>
</dbReference>
<dbReference type="PANTHER" id="PTHR23138:SF87">
    <property type="entry name" value="E3 SUMO-PROTEIN LIGASE RANBP2"/>
    <property type="match status" value="1"/>
</dbReference>
<dbReference type="PANTHER" id="PTHR23138">
    <property type="entry name" value="RAN BINDING PROTEIN"/>
    <property type="match status" value="1"/>
</dbReference>
<dbReference type="Pfam" id="PF00638">
    <property type="entry name" value="Ran_BP1"/>
    <property type="match status" value="1"/>
</dbReference>
<dbReference type="SMART" id="SM00160">
    <property type="entry name" value="RanBD"/>
    <property type="match status" value="1"/>
</dbReference>
<dbReference type="SUPFAM" id="SSF50729">
    <property type="entry name" value="PH domain-like"/>
    <property type="match status" value="1"/>
</dbReference>
<dbReference type="PROSITE" id="PS50196">
    <property type="entry name" value="RANBD1"/>
    <property type="match status" value="1"/>
</dbReference>
<accession>P41920</accession>
<accession>D6VRY9</accession>
<proteinExistence type="evidence at protein level"/>
<name>YRB1_YEAST</name>
<feature type="chain" id="PRO_0000213670" description="Ran-specific GTPase-activating protein 1">
    <location>
        <begin position="1"/>
        <end position="201"/>
    </location>
</feature>
<feature type="domain" description="RanBD1" evidence="1">
    <location>
        <begin position="64"/>
        <end position="200"/>
    </location>
</feature>
<feature type="region of interest" description="Disordered" evidence="2">
    <location>
        <begin position="1"/>
        <end position="66"/>
    </location>
</feature>
<feature type="compositionally biased region" description="Basic and acidic residues" evidence="2">
    <location>
        <begin position="1"/>
        <end position="17"/>
    </location>
</feature>
<feature type="compositionally biased region" description="Basic and acidic residues" evidence="2">
    <location>
        <begin position="32"/>
        <end position="66"/>
    </location>
</feature>
<feature type="modified residue" description="Phosphoserine" evidence="4 5 6 7">
    <location>
        <position position="60"/>
    </location>
</feature>
<feature type="strand" evidence="8">
    <location>
        <begin position="83"/>
        <end position="97"/>
    </location>
</feature>
<feature type="turn" evidence="8">
    <location>
        <begin position="98"/>
        <end position="101"/>
    </location>
</feature>
<feature type="strand" evidence="8">
    <location>
        <begin position="102"/>
        <end position="116"/>
    </location>
</feature>
<feature type="turn" evidence="8">
    <location>
        <begin position="117"/>
        <end position="119"/>
    </location>
</feature>
<feature type="strand" evidence="8">
    <location>
        <begin position="122"/>
        <end position="127"/>
    </location>
</feature>
<feature type="turn" evidence="8">
    <location>
        <begin position="129"/>
        <end position="131"/>
    </location>
</feature>
<feature type="strand" evidence="8">
    <location>
        <begin position="134"/>
        <end position="139"/>
    </location>
</feature>
<feature type="strand" evidence="10">
    <location>
        <begin position="147"/>
        <end position="149"/>
    </location>
</feature>
<feature type="strand" evidence="8">
    <location>
        <begin position="153"/>
        <end position="163"/>
    </location>
</feature>
<feature type="strand" evidence="9">
    <location>
        <begin position="165"/>
        <end position="168"/>
    </location>
</feature>
<feature type="strand" evidence="8">
    <location>
        <begin position="170"/>
        <end position="180"/>
    </location>
</feature>
<feature type="helix" evidence="8">
    <location>
        <begin position="181"/>
        <end position="199"/>
    </location>
</feature>
<protein>
    <recommendedName>
        <fullName>Ran-specific GTPase-activating protein 1</fullName>
    </recommendedName>
    <alternativeName>
        <fullName>Chromosome stability protein 20</fullName>
    </alternativeName>
    <alternativeName>
        <fullName>Perinuclear array-localized protein</fullName>
    </alternativeName>
    <alternativeName>
        <fullName>Ran-binding protein 1</fullName>
        <shortName>RANBP1</shortName>
    </alternativeName>
</protein>
<gene>
    <name type="primary">YRB1</name>
    <name type="synonym">CST20</name>
    <name type="synonym">HTN1</name>
    <name type="synonym">SFO1</name>
    <name type="ordered locus">YDR002W</name>
    <name type="ORF">YD8119.08</name>
</gene>
<organism>
    <name type="scientific">Saccharomyces cerevisiae (strain ATCC 204508 / S288c)</name>
    <name type="common">Baker's yeast</name>
    <dbReference type="NCBI Taxonomy" id="559292"/>
    <lineage>
        <taxon>Eukaryota</taxon>
        <taxon>Fungi</taxon>
        <taxon>Dikarya</taxon>
        <taxon>Ascomycota</taxon>
        <taxon>Saccharomycotina</taxon>
        <taxon>Saccharomycetes</taxon>
        <taxon>Saccharomycetales</taxon>
        <taxon>Saccharomycetaceae</taxon>
        <taxon>Saccharomyces</taxon>
    </lineage>
</organism>
<evidence type="ECO:0000255" key="1">
    <source>
        <dbReference type="PROSITE-ProRule" id="PRU00164"/>
    </source>
</evidence>
<evidence type="ECO:0000256" key="2">
    <source>
        <dbReference type="SAM" id="MobiDB-lite"/>
    </source>
</evidence>
<evidence type="ECO:0000305" key="3"/>
<evidence type="ECO:0007744" key="4">
    <source>
    </source>
</evidence>
<evidence type="ECO:0007744" key="5">
    <source>
    </source>
</evidence>
<evidence type="ECO:0007744" key="6">
    <source>
    </source>
</evidence>
<evidence type="ECO:0007744" key="7">
    <source>
    </source>
</evidence>
<evidence type="ECO:0007829" key="8">
    <source>
        <dbReference type="PDB" id="4HAT"/>
    </source>
</evidence>
<evidence type="ECO:0007829" key="9">
    <source>
        <dbReference type="PDB" id="4WVF"/>
    </source>
</evidence>
<evidence type="ECO:0007829" key="10">
    <source>
        <dbReference type="PDB" id="5YST"/>
    </source>
</evidence>